<name>CRVP1_VARAC</name>
<proteinExistence type="evidence at transcript level"/>
<keyword id="KW-0108">Calcium channel impairing toxin</keyword>
<keyword id="KW-1015">Disulfide bond</keyword>
<keyword id="KW-0872">Ion channel impairing toxin</keyword>
<keyword id="KW-0528">Neurotoxin</keyword>
<keyword id="KW-0632">Potassium channel impairing toxin</keyword>
<keyword id="KW-0964">Secreted</keyword>
<keyword id="KW-0732">Signal</keyword>
<keyword id="KW-0800">Toxin</keyword>
<protein>
    <recommendedName>
        <fullName>Cysteine-rich venom protein VAR1</fullName>
        <shortName>CRVP</shortName>
    </recommendedName>
    <alternativeName>
        <fullName>Cysteine-rich secretory protein VAR1</fullName>
        <shortName>CRISP-VAR1</shortName>
    </alternativeName>
</protein>
<organism>
    <name type="scientific">Varanus acanthurus</name>
    <name type="common">Ridge-tailed monitor</name>
    <dbReference type="NCBI Taxonomy" id="62035"/>
    <lineage>
        <taxon>Eukaryota</taxon>
        <taxon>Metazoa</taxon>
        <taxon>Chordata</taxon>
        <taxon>Craniata</taxon>
        <taxon>Vertebrata</taxon>
        <taxon>Euteleostomi</taxon>
        <taxon>Lepidosauria</taxon>
        <taxon>Squamata</taxon>
        <taxon>Bifurcata</taxon>
        <taxon>Unidentata</taxon>
        <taxon>Episquamata</taxon>
        <taxon>Toxicofera</taxon>
        <taxon>Anguimorpha</taxon>
        <taxon>Paleoanguimorpha</taxon>
        <taxon>Varanoidea</taxon>
        <taxon>Varanidae</taxon>
        <taxon>Varanus</taxon>
    </lineage>
</organism>
<feature type="signal peptide" evidence="2">
    <location>
        <begin position="1"/>
        <end position="22"/>
    </location>
</feature>
<feature type="chain" id="PRO_0000380652" description="Cysteine-rich venom protein VAR1">
    <location>
        <begin position="23"/>
        <end position="100" status="greater than"/>
    </location>
</feature>
<feature type="domain" description="SCP">
    <location>
        <begin position="41"/>
        <end position="81"/>
    </location>
</feature>
<feature type="non-terminal residue">
    <location>
        <position position="100"/>
    </location>
</feature>
<evidence type="ECO:0000250" key="1"/>
<evidence type="ECO:0000255" key="2"/>
<evidence type="ECO:0000305" key="3"/>
<dbReference type="EMBL" id="DQ139881">
    <property type="protein sequence ID" value="AAZ75587.1"/>
    <property type="molecule type" value="mRNA"/>
</dbReference>
<dbReference type="SMR" id="Q2XXR4"/>
<dbReference type="GO" id="GO:0005576">
    <property type="term" value="C:extracellular region"/>
    <property type="evidence" value="ECO:0007669"/>
    <property type="project" value="UniProtKB-SubCell"/>
</dbReference>
<dbReference type="GO" id="GO:0005246">
    <property type="term" value="F:calcium channel regulator activity"/>
    <property type="evidence" value="ECO:0007669"/>
    <property type="project" value="UniProtKB-KW"/>
</dbReference>
<dbReference type="GO" id="GO:0015459">
    <property type="term" value="F:potassium channel regulator activity"/>
    <property type="evidence" value="ECO:0007669"/>
    <property type="project" value="UniProtKB-KW"/>
</dbReference>
<dbReference type="GO" id="GO:0090729">
    <property type="term" value="F:toxin activity"/>
    <property type="evidence" value="ECO:0007669"/>
    <property type="project" value="UniProtKB-KW"/>
</dbReference>
<dbReference type="Gene3D" id="3.40.33.10">
    <property type="entry name" value="CAP"/>
    <property type="match status" value="1"/>
</dbReference>
<dbReference type="InterPro" id="IPR014044">
    <property type="entry name" value="CAP_dom"/>
</dbReference>
<dbReference type="InterPro" id="IPR035940">
    <property type="entry name" value="CAP_sf"/>
</dbReference>
<dbReference type="Pfam" id="PF00188">
    <property type="entry name" value="CAP"/>
    <property type="match status" value="1"/>
</dbReference>
<dbReference type="SUPFAM" id="SSF55797">
    <property type="entry name" value="PR-1-like"/>
    <property type="match status" value="1"/>
</dbReference>
<sequence length="100" mass="11081">MILLKLYLTLAAILCQSRGTTSLDLDDLMTTNPEIQNEIINKHNDLRRTVDPPAKNMLKMSWDNIIAESAKRAALRCNQNEHTPVSGRTIGGCGCAEKIT</sequence>
<accession>Q2XXR4</accession>
<comment type="function">
    <text evidence="1">Blocks ryanodine receptors, and potassium channels.</text>
</comment>
<comment type="subcellular location">
    <subcellularLocation>
        <location evidence="1">Secreted</location>
    </subcellularLocation>
</comment>
<comment type="tissue specificity">
    <text>Expressed by the venom gland.</text>
</comment>
<comment type="PTM">
    <text evidence="1">Contains 8 disulfide bonds.</text>
</comment>
<comment type="similarity">
    <text evidence="3">Belongs to the CRISP family.</text>
</comment>
<reference key="1">
    <citation type="journal article" date="2006" name="Nature">
        <title>Early evolution of the venom system in lizards and snakes.</title>
        <authorList>
            <person name="Fry B.G."/>
            <person name="Vidal N."/>
            <person name="Norman J.A."/>
            <person name="Vonk F.J."/>
            <person name="Scheib H."/>
            <person name="Ramjan S.F.R."/>
            <person name="Kuruppu S."/>
            <person name="Fung K."/>
            <person name="Blair Hedges S."/>
            <person name="Richardson M.K."/>
            <person name="Hodgson W.C."/>
            <person name="Ignjatovic V."/>
            <person name="Summerhayes R."/>
            <person name="Kochva E."/>
        </authorList>
    </citation>
    <scope>NUCLEOTIDE SEQUENCE [LARGE SCALE MRNA]</scope>
    <source>
        <tissue>Venom gland</tissue>
    </source>
</reference>